<feature type="chain" id="PRO_1000055788" description="Large ribosomal subunit protein bL17">
    <location>
        <begin position="1"/>
        <end position="131"/>
    </location>
</feature>
<organism>
    <name type="scientific">Burkholderia vietnamiensis (strain G4 / LMG 22486)</name>
    <name type="common">Burkholderia cepacia (strain R1808)</name>
    <dbReference type="NCBI Taxonomy" id="269482"/>
    <lineage>
        <taxon>Bacteria</taxon>
        <taxon>Pseudomonadati</taxon>
        <taxon>Pseudomonadota</taxon>
        <taxon>Betaproteobacteria</taxon>
        <taxon>Burkholderiales</taxon>
        <taxon>Burkholderiaceae</taxon>
        <taxon>Burkholderia</taxon>
        <taxon>Burkholderia cepacia complex</taxon>
    </lineage>
</organism>
<proteinExistence type="inferred from homology"/>
<dbReference type="EMBL" id="CP000614">
    <property type="protein sequence ID" value="ABO53370.1"/>
    <property type="molecule type" value="Genomic_DNA"/>
</dbReference>
<dbReference type="SMR" id="A4JAR7"/>
<dbReference type="KEGG" id="bvi:Bcep1808_0357"/>
<dbReference type="eggNOG" id="COG0203">
    <property type="taxonomic scope" value="Bacteria"/>
</dbReference>
<dbReference type="HOGENOM" id="CLU_074407_2_0_4"/>
<dbReference type="Proteomes" id="UP000002287">
    <property type="component" value="Chromosome 1"/>
</dbReference>
<dbReference type="GO" id="GO:0022625">
    <property type="term" value="C:cytosolic large ribosomal subunit"/>
    <property type="evidence" value="ECO:0007669"/>
    <property type="project" value="TreeGrafter"/>
</dbReference>
<dbReference type="GO" id="GO:0003735">
    <property type="term" value="F:structural constituent of ribosome"/>
    <property type="evidence" value="ECO:0007669"/>
    <property type="project" value="InterPro"/>
</dbReference>
<dbReference type="GO" id="GO:0006412">
    <property type="term" value="P:translation"/>
    <property type="evidence" value="ECO:0007669"/>
    <property type="project" value="UniProtKB-UniRule"/>
</dbReference>
<dbReference type="FunFam" id="3.90.1030.10:FF:000001">
    <property type="entry name" value="50S ribosomal protein L17"/>
    <property type="match status" value="1"/>
</dbReference>
<dbReference type="Gene3D" id="3.90.1030.10">
    <property type="entry name" value="Ribosomal protein L17"/>
    <property type="match status" value="1"/>
</dbReference>
<dbReference type="HAMAP" id="MF_01368">
    <property type="entry name" value="Ribosomal_bL17"/>
    <property type="match status" value="1"/>
</dbReference>
<dbReference type="InterPro" id="IPR000456">
    <property type="entry name" value="Ribosomal_bL17"/>
</dbReference>
<dbReference type="InterPro" id="IPR047859">
    <property type="entry name" value="Ribosomal_bL17_CS"/>
</dbReference>
<dbReference type="InterPro" id="IPR036373">
    <property type="entry name" value="Ribosomal_bL17_sf"/>
</dbReference>
<dbReference type="NCBIfam" id="TIGR00059">
    <property type="entry name" value="L17"/>
    <property type="match status" value="1"/>
</dbReference>
<dbReference type="PANTHER" id="PTHR14413:SF16">
    <property type="entry name" value="LARGE RIBOSOMAL SUBUNIT PROTEIN BL17M"/>
    <property type="match status" value="1"/>
</dbReference>
<dbReference type="PANTHER" id="PTHR14413">
    <property type="entry name" value="RIBOSOMAL PROTEIN L17"/>
    <property type="match status" value="1"/>
</dbReference>
<dbReference type="Pfam" id="PF01196">
    <property type="entry name" value="Ribosomal_L17"/>
    <property type="match status" value="1"/>
</dbReference>
<dbReference type="SUPFAM" id="SSF64263">
    <property type="entry name" value="Prokaryotic ribosomal protein L17"/>
    <property type="match status" value="1"/>
</dbReference>
<dbReference type="PROSITE" id="PS01167">
    <property type="entry name" value="RIBOSOMAL_L17"/>
    <property type="match status" value="1"/>
</dbReference>
<keyword id="KW-0687">Ribonucleoprotein</keyword>
<keyword id="KW-0689">Ribosomal protein</keyword>
<protein>
    <recommendedName>
        <fullName evidence="1">Large ribosomal subunit protein bL17</fullName>
    </recommendedName>
    <alternativeName>
        <fullName evidence="2">50S ribosomal protein L17</fullName>
    </alternativeName>
</protein>
<evidence type="ECO:0000255" key="1">
    <source>
        <dbReference type="HAMAP-Rule" id="MF_01368"/>
    </source>
</evidence>
<evidence type="ECO:0000305" key="2"/>
<comment type="subunit">
    <text evidence="1">Part of the 50S ribosomal subunit. Contacts protein L32.</text>
</comment>
<comment type="similarity">
    <text evidence="1">Belongs to the bacterial ribosomal protein bL17 family.</text>
</comment>
<name>RL17_BURVG</name>
<sequence>MRHRHGLRKLNRTSSHRLAMLRNMSNSLIEHEVIKTTLPKAKELRKVVEPLITLGKKPSLANRRLAFNRLRDRDSVAKLFDVLGPRFANRPGGYLRVLKFGFRVGDNAPMALVELLDRPEVDETENVQEAE</sequence>
<accession>A4JAR7</accession>
<reference key="1">
    <citation type="submission" date="2007-03" db="EMBL/GenBank/DDBJ databases">
        <title>Complete sequence of chromosome 1 of Burkholderia vietnamiensis G4.</title>
        <authorList>
            <consortium name="US DOE Joint Genome Institute"/>
            <person name="Copeland A."/>
            <person name="Lucas S."/>
            <person name="Lapidus A."/>
            <person name="Barry K."/>
            <person name="Detter J.C."/>
            <person name="Glavina del Rio T."/>
            <person name="Hammon N."/>
            <person name="Israni S."/>
            <person name="Dalin E."/>
            <person name="Tice H."/>
            <person name="Pitluck S."/>
            <person name="Chain P."/>
            <person name="Malfatti S."/>
            <person name="Shin M."/>
            <person name="Vergez L."/>
            <person name="Schmutz J."/>
            <person name="Larimer F."/>
            <person name="Land M."/>
            <person name="Hauser L."/>
            <person name="Kyrpides N."/>
            <person name="Tiedje J."/>
            <person name="Richardson P."/>
        </authorList>
    </citation>
    <scope>NUCLEOTIDE SEQUENCE [LARGE SCALE GENOMIC DNA]</scope>
    <source>
        <strain>G4 / LMG 22486</strain>
    </source>
</reference>
<gene>
    <name evidence="1" type="primary">rplQ</name>
    <name type="ordered locus">Bcep1808_0357</name>
</gene>